<organism>
    <name type="scientific">Lychas mucronatus</name>
    <name type="common">Chinese swimming scorpion</name>
    <dbReference type="NCBI Taxonomy" id="172552"/>
    <lineage>
        <taxon>Eukaryota</taxon>
        <taxon>Metazoa</taxon>
        <taxon>Ecdysozoa</taxon>
        <taxon>Arthropoda</taxon>
        <taxon>Chelicerata</taxon>
        <taxon>Arachnida</taxon>
        <taxon>Scorpiones</taxon>
        <taxon>Buthida</taxon>
        <taxon>Buthoidea</taxon>
        <taxon>Buthidae</taxon>
        <taxon>Lychas</taxon>
    </lineage>
</organism>
<protein>
    <recommendedName>
        <fullName>Toxin KTx8</fullName>
        <shortName evidence="4">LmKTx8</shortName>
    </recommendedName>
</protein>
<name>KA11L_LYCMC</name>
<sequence>MNKVCFVVVLVLFVALAAYVSPIEGVPTGGCPLSDSLCAKYCKSHKFGKTGRCTGPNKMKCKCLV</sequence>
<proteinExistence type="inferred from homology"/>
<accession>A9QLM3</accession>
<evidence type="ECO:0000255" key="1"/>
<evidence type="ECO:0000255" key="2">
    <source>
        <dbReference type="PROSITE-ProRule" id="PRU01209"/>
    </source>
</evidence>
<evidence type="ECO:0000269" key="3">
    <source>
    </source>
</evidence>
<evidence type="ECO:0000303" key="4">
    <source>
    </source>
</evidence>
<evidence type="ECO:0000305" key="5"/>
<evidence type="ECO:0000305" key="6">
    <source>
    </source>
</evidence>
<feature type="signal peptide" evidence="1">
    <location>
        <begin position="1"/>
        <end position="25"/>
    </location>
</feature>
<feature type="chain" id="PRO_0000396528" description="Toxin KTx8" evidence="6">
    <location>
        <begin position="26"/>
        <end position="65"/>
    </location>
</feature>
<feature type="disulfide bond" evidence="2">
    <location>
        <begin position="31"/>
        <end position="53"/>
    </location>
</feature>
<feature type="disulfide bond" evidence="2">
    <location>
        <begin position="38"/>
        <end position="61"/>
    </location>
</feature>
<feature type="disulfide bond" evidence="2">
    <location>
        <begin position="42"/>
        <end position="63"/>
    </location>
</feature>
<comment type="function">
    <text evidence="3">This recombinant toxin inhibits the mammalian voltage-gated potassium channels Kv1.3/KCNA3 in vitro with an IC(50) of 26.40 nM.</text>
</comment>
<comment type="subcellular location">
    <subcellularLocation>
        <location evidence="6">Secreted</location>
    </subcellularLocation>
</comment>
<comment type="tissue specificity">
    <text evidence="6">Expressed by the venom gland.</text>
</comment>
<comment type="domain">
    <text evidence="5">Has the structural arrangement of an alpha-helix connected to antiparallel beta-sheets by disulfide bonds (CS-alpha/beta).</text>
</comment>
<comment type="miscellaneous">
    <text evidence="6">Negative results: does not have effect on BK currents (KCa1.1/KCNMA1 channels).</text>
</comment>
<comment type="similarity">
    <text evidence="5">Belongs to the short scorpion toxin superfamily. Potassium channel inhibitor family. Alpha-KTx 11 subfamily.</text>
</comment>
<dbReference type="EMBL" id="EU118812">
    <property type="protein sequence ID" value="ABW90713.1"/>
    <property type="molecule type" value="mRNA"/>
</dbReference>
<dbReference type="SMR" id="A9QLM3"/>
<dbReference type="TCDB" id="8.B.2.2.2">
    <property type="family name" value="the short scorpion toxin (s-st) family"/>
</dbReference>
<dbReference type="GO" id="GO:0005576">
    <property type="term" value="C:extracellular region"/>
    <property type="evidence" value="ECO:0007669"/>
    <property type="project" value="UniProtKB-SubCell"/>
</dbReference>
<dbReference type="GO" id="GO:0015459">
    <property type="term" value="F:potassium channel regulator activity"/>
    <property type="evidence" value="ECO:0007669"/>
    <property type="project" value="UniProtKB-KW"/>
</dbReference>
<dbReference type="GO" id="GO:0090729">
    <property type="term" value="F:toxin activity"/>
    <property type="evidence" value="ECO:0007669"/>
    <property type="project" value="UniProtKB-KW"/>
</dbReference>
<dbReference type="InterPro" id="IPR036574">
    <property type="entry name" value="Scorpion_toxin-like_sf"/>
</dbReference>
<dbReference type="SUPFAM" id="SSF57095">
    <property type="entry name" value="Scorpion toxin-like"/>
    <property type="match status" value="1"/>
</dbReference>
<keyword id="KW-1015">Disulfide bond</keyword>
<keyword id="KW-0872">Ion channel impairing toxin</keyword>
<keyword id="KW-0528">Neurotoxin</keyword>
<keyword id="KW-0632">Potassium channel impairing toxin</keyword>
<keyword id="KW-0964">Secreted</keyword>
<keyword id="KW-0732">Signal</keyword>
<keyword id="KW-0800">Toxin</keyword>
<keyword id="KW-1220">Voltage-gated potassium channel impairing toxin</keyword>
<reference key="1">
    <citation type="journal article" date="2007" name="Peptides">
        <title>Molecular cloning and electrophysiological studies on the first K(+) channel toxin (LmKTx8) derived from scorpion Lychas mucronatus.</title>
        <authorList>
            <person name="Wu W."/>
            <person name="Yin S."/>
            <person name="Ma Y."/>
            <person name="Wu Y.L."/>
            <person name="Zhao R."/>
            <person name="Gan G."/>
            <person name="Ding J."/>
            <person name="Cao Z."/>
            <person name="Li W."/>
        </authorList>
    </citation>
    <scope>NUCLEOTIDE SEQUENCE [MRNA]</scope>
    <scope>FUNCTION</scope>
    <scope>RECOMBINANT EXPRESSION</scope>
    <source>
        <tissue>Venom gland</tissue>
    </source>
</reference>